<sequence>MASLALRGSSENPAPTKDTTTNPRGIPYAPFVDRVEDYVTSTTDVESTLKSFSEMISKYQFMESNTQRRSAGLKDKIPEIQKTLAMVRFLAGREEDDEPLETHFELNDTLYAKALVPTTKEVYLWLGANVMLAYPVDEAEELLVGKLGAAKTSLENCDEDLDFLREQITTLEVATARVYNWDVGQRRKEREGKGGKS</sequence>
<name>PRF1_ELSFA</name>
<protein>
    <recommendedName>
        <fullName evidence="4">Prefoldin subunit 3</fullName>
    </recommendedName>
    <alternativeName>
        <fullName evidence="4">Elsinochromes biosynthesis cluster protein PRF1</fullName>
    </alternativeName>
</protein>
<reference key="1">
    <citation type="journal article" date="2008" name="Microbiology">
        <title>Determination of a transcriptional regulator-like gene involved in biosynthesis of elsinochrome phytotoxin by the citrus scab fungus, Elsinoe fawcettii.</title>
        <authorList>
            <person name="Chung K.R."/>
            <person name="Liao H.L."/>
        </authorList>
    </citation>
    <scope>NUCLEOTIDE SEQUENCE [GENOMIC DNA]</scope>
    <scope>IDENTIFICATION</scope>
    <scope>FUNCTION</scope>
    <scope>INDUCTION</scope>
</reference>
<reference key="2">
    <citation type="journal article" date="2011" name="Mol. Plant Pathol.">
        <title>Elsinoe fawcettii and Elsinoe australis: the fungal pathogens causing citrus scab.</title>
        <authorList>
            <person name="Chung K.R."/>
        </authorList>
    </citation>
    <scope>REVIEW</scope>
</reference>
<dbReference type="EMBL" id="EU401707">
    <property type="protein sequence ID" value="ABZ01833.1"/>
    <property type="molecule type" value="Genomic_DNA"/>
</dbReference>
<dbReference type="SMR" id="B0ZT47"/>
<dbReference type="OrthoDB" id="6375174at2759"/>
<dbReference type="GO" id="GO:0005737">
    <property type="term" value="C:cytoplasm"/>
    <property type="evidence" value="ECO:0007669"/>
    <property type="project" value="TreeGrafter"/>
</dbReference>
<dbReference type="GO" id="GO:0016272">
    <property type="term" value="C:prefoldin complex"/>
    <property type="evidence" value="ECO:0007669"/>
    <property type="project" value="InterPro"/>
</dbReference>
<dbReference type="GO" id="GO:0015631">
    <property type="term" value="F:tubulin binding"/>
    <property type="evidence" value="ECO:0007669"/>
    <property type="project" value="TreeGrafter"/>
</dbReference>
<dbReference type="GO" id="GO:0007017">
    <property type="term" value="P:microtubule-based process"/>
    <property type="evidence" value="ECO:0007669"/>
    <property type="project" value="TreeGrafter"/>
</dbReference>
<dbReference type="GO" id="GO:0006457">
    <property type="term" value="P:protein folding"/>
    <property type="evidence" value="ECO:0007669"/>
    <property type="project" value="InterPro"/>
</dbReference>
<dbReference type="GO" id="GO:0007021">
    <property type="term" value="P:tubulin complex assembly"/>
    <property type="evidence" value="ECO:0007669"/>
    <property type="project" value="TreeGrafter"/>
</dbReference>
<dbReference type="CDD" id="cd23156">
    <property type="entry name" value="Prefoldin_3"/>
    <property type="match status" value="1"/>
</dbReference>
<dbReference type="FunFam" id="1.10.287.370:FF:000001">
    <property type="entry name" value="Prefoldin subunit 3"/>
    <property type="match status" value="1"/>
</dbReference>
<dbReference type="Gene3D" id="1.10.287.370">
    <property type="match status" value="1"/>
</dbReference>
<dbReference type="InterPro" id="IPR016655">
    <property type="entry name" value="PFD3"/>
</dbReference>
<dbReference type="InterPro" id="IPR009053">
    <property type="entry name" value="Prefoldin"/>
</dbReference>
<dbReference type="InterPro" id="IPR004127">
    <property type="entry name" value="Prefoldin_subunit_alpha"/>
</dbReference>
<dbReference type="PANTHER" id="PTHR12409">
    <property type="entry name" value="PREFOLDIN SUBUNIT 3"/>
    <property type="match status" value="1"/>
</dbReference>
<dbReference type="PANTHER" id="PTHR12409:SF0">
    <property type="entry name" value="PREFOLDIN SUBUNIT 3"/>
    <property type="match status" value="1"/>
</dbReference>
<dbReference type="Pfam" id="PF02996">
    <property type="entry name" value="Prefoldin"/>
    <property type="match status" value="1"/>
</dbReference>
<dbReference type="PIRSF" id="PIRSF016396">
    <property type="entry name" value="Prefoldin_subunit_3"/>
    <property type="match status" value="1"/>
</dbReference>
<dbReference type="SUPFAM" id="SSF46579">
    <property type="entry name" value="Prefoldin"/>
    <property type="match status" value="1"/>
</dbReference>
<accession>B0ZT47</accession>
<organism>
    <name type="scientific">Elsinoe fawcettii</name>
    <name type="common">Citrus scab fungus</name>
    <name type="synonym">Sphaceloma fawcettii</name>
    <dbReference type="NCBI Taxonomy" id="40997"/>
    <lineage>
        <taxon>Eukaryota</taxon>
        <taxon>Fungi</taxon>
        <taxon>Dikarya</taxon>
        <taxon>Ascomycota</taxon>
        <taxon>Pezizomycotina</taxon>
        <taxon>Dothideomycetes</taxon>
        <taxon>Dothideomycetidae</taxon>
        <taxon>Myriangiales</taxon>
        <taxon>Elsinoaceae</taxon>
        <taxon>Elsinoe</taxon>
    </lineage>
</organism>
<feature type="chain" id="PRO_0000445819" description="Prefoldin subunit 3">
    <location>
        <begin position="1"/>
        <end position="197"/>
    </location>
</feature>
<feature type="region of interest" description="Disordered" evidence="2">
    <location>
        <begin position="1"/>
        <end position="26"/>
    </location>
</feature>
<feature type="compositionally biased region" description="Polar residues" evidence="2">
    <location>
        <begin position="9"/>
        <end position="23"/>
    </location>
</feature>
<gene>
    <name evidence="4" type="primary">PRF1</name>
</gene>
<keyword id="KW-0143">Chaperone</keyword>
<proteinExistence type="evidence at transcript level"/>
<comment type="function">
    <text evidence="3 5">Prefoldin subunit; part of the gene cluster that mediates the biosynthesis of elsinochromes, pigments consisting of at least four interconvertible tautomers (A, B, C and D) that have a core phenolic quinone to which various side chains are attached and which play an important role in fungal pathogenesis (PubMed:18957608). The non-reducing polyketide synthase PKS1 was proposed to iteratively catalyze decarboxylation between acetyl-CoA and malonyl-CoA subunits for polyketide chain elongation. The released polyketide undergoes cyclization to form an aromatic ring, and proceeds via serial modification steps to produce the heptaketide back- bone of elsinochrome. As elsinochrome has a symmetrical structure, two identical heptaketides are fused to form a core 1,2-dihydrobenzo-perylene ring structure, which can then be successively modified to produce the various derivatives of elsinochrome. Some of these reactions may be cooperatively carried out, at least in part, by the products of RDT1, OXR1 and PKS1. PRF1, embedded within the elsinochrome cluster possibly functions to stabilize some of the biosynthetic enzymes required for elsinochrome production. As prefoldin is a hexamer containing 2 a and 4 b subunits, additional prefoldin subunits, whose coding genes may not immediately link to the elsinochrome biosynthetic gene cluster, are required to fulfill the chaperone function. In addition, no methyltransferase-coding gene exists within the biosynthetic gene cluster, even though elsinochrome has four methyl groups at positions C3, C7, C8 and C12. Apparently, the identified gene cluster does not contain the entire entourage of genes responsible for elsinochrome biosynthesis. Once elsinochrome is synthesized, it must be exported outside the fungal cells, which is probably accomplished by the ECT1 transporter, to avoid toxicity (PubMed:21199563).</text>
</comment>
<comment type="subunit">
    <text evidence="1">Heterohexamer of two PFD-alpha type and four PFD-beta type subunits.</text>
</comment>
<comment type="induction">
    <text evidence="3">Expression is positively regulated by the cluster-specific transcription factor TSF1 (PubMed:18957608). Expression is induced by the presence of the cluster-specific polyketide synthase PKS1 (PubMed:18957608). Expression is up-regulated in the presence of large amounts of glucose, during nitrogen starvation or at alkaline pH, conditions highly conducive to elsinochrome accumulation (PubMed:18957608).</text>
</comment>
<comment type="similarity">
    <text evidence="6">Belongs to the prefoldin subunit alpha family.</text>
</comment>
<evidence type="ECO:0000250" key="1">
    <source>
        <dbReference type="UniProtKB" id="P48363"/>
    </source>
</evidence>
<evidence type="ECO:0000256" key="2">
    <source>
        <dbReference type="SAM" id="MobiDB-lite"/>
    </source>
</evidence>
<evidence type="ECO:0000269" key="3">
    <source>
    </source>
</evidence>
<evidence type="ECO:0000303" key="4">
    <source>
    </source>
</evidence>
<evidence type="ECO:0000303" key="5">
    <source>
    </source>
</evidence>
<evidence type="ECO:0000305" key="6"/>